<sequence>MEKITEKILLEKSSTKTNKLDQIKTLNLSRMSLKSEDLPVPLLSKLCRLEKLDLSGNMLQKIPKGLRLPCLKILNCSNNDMEDVLSLEALTNLEELRLEDNLYLTVNDEHKVIFLLPNLRMFNGKDISSTAHHIRHGSTEILRKRVIGVWERDFSLPDPISAKSLAAVEKSFVNAACTQVKYGPNSLSDYTKWRVEKIAKEYLKSLTSSEEEERVADTTPTKENKTKACDVGGNSITSPQKRTRNNTDVVAEASPRKSSRLVSAAPVEASPRKSARVLNTPQKTQPVVSSPRKHARLTSAETPESSPRKSSRLENVTQKAASQTESPRKPGMSTPTSKQAKCESPRKQSKQSTAKMEKSTPRKTTKAKLQVPQEPVSLTPLHVLQCHSRQNDPDDFSTQLWACAFEPQQDDSIDISGGSQTIATCGGETLCVINCESGLVLKKYKVPGEDFFSLAWSTVLMSRTGGSARPCNILAAGGKRGCVKLIHPRVNLAFGEFRVSRRAISIMRFNPRKPTFLFTGTYDKKIFLWDIGGLDQDYNFKISKLLTLETSSTPLHLALLPSSPDTHLLSGCDEGLYCFDVQLSKNTLKRNEEIEIVFPIYKKNDKKNNYRTIDGLSFLSDDVVASKSHMQGSIYLWSWSATRASWNSRKKEVPAVILAELQWSSTDIPYLSLGTCPGYGYVVCGDEQGRLWMYHITDTMMENFKSGKTISATEVLQWPSPIRAGKGALEGPSINSTAMDPGLHYLVALTDKNMVVVWKRESH</sequence>
<protein>
    <recommendedName>
        <fullName>Leucine-rich repeat and WD repeat-containing protein 1</fullName>
    </recommendedName>
    <alternativeName>
        <fullName>ORC-associated protein</fullName>
        <shortName>ORCA</shortName>
    </alternativeName>
    <alternativeName>
        <fullName>Origin recognition complex-associated protein</fullName>
    </alternativeName>
</protein>
<accession>B0R160</accession>
<accession>Q503J1</accession>
<evidence type="ECO:0000250" key="1"/>
<evidence type="ECO:0000250" key="2">
    <source>
        <dbReference type="UniProtKB" id="Q8BUI3"/>
    </source>
</evidence>
<evidence type="ECO:0000250" key="3">
    <source>
        <dbReference type="UniProtKB" id="Q9UFC0"/>
    </source>
</evidence>
<evidence type="ECO:0000256" key="4">
    <source>
        <dbReference type="SAM" id="MobiDB-lite"/>
    </source>
</evidence>
<evidence type="ECO:0000269" key="5">
    <source>
    </source>
</evidence>
<evidence type="ECO:0000305" key="6"/>
<proteinExistence type="evidence at protein level"/>
<keyword id="KW-0137">Centromere</keyword>
<keyword id="KW-0156">Chromatin regulator</keyword>
<keyword id="KW-0158">Chromosome</keyword>
<keyword id="KW-0963">Cytoplasm</keyword>
<keyword id="KW-0206">Cytoskeleton</keyword>
<keyword id="KW-0235">DNA replication</keyword>
<keyword id="KW-0995">Kinetochore</keyword>
<keyword id="KW-0433">Leucine-rich repeat</keyword>
<keyword id="KW-0539">Nucleus</keyword>
<keyword id="KW-0597">Phosphoprotein</keyword>
<keyword id="KW-1185">Reference proteome</keyword>
<keyword id="KW-0677">Repeat</keyword>
<keyword id="KW-0779">Telomere</keyword>
<keyword id="KW-0853">WD repeat</keyword>
<comment type="function">
    <text evidence="1">Required for G1/S transition. Recruits and stabilizes the origin recognition complex (ORC) onto chromatin during G1 to establish pre-replication complex (preRC) and to heterochromatic sites in post-replicated cells. Binds a combination of DNA and histone methylation repressive marks on heterochromatin. Required for silencing of major satellite repeats. May be important ORC2, ORC3 and ORC4 stability (By similarity).</text>
</comment>
<comment type="subunit">
    <text evidence="1">Component of the ORC complex.</text>
</comment>
<comment type="subcellular location">
    <subcellularLocation>
        <location evidence="3">Nucleus</location>
    </subcellularLocation>
    <subcellularLocation>
        <location evidence="3">Chromosome</location>
        <location evidence="3">Centromere</location>
    </subcellularLocation>
    <subcellularLocation>
        <location evidence="3">Chromosome</location>
        <location evidence="3">Telomere</location>
    </subcellularLocation>
    <subcellularLocation>
        <location evidence="2">Cytoplasm</location>
        <location evidence="2">Cytoskeleton</location>
        <location evidence="2">Microtubule organizing center</location>
        <location evidence="2">Centrosome</location>
    </subcellularLocation>
    <subcellularLocation>
        <location evidence="3">Chromosome</location>
        <location evidence="3">Centromere</location>
        <location evidence="3">Kinetochore</location>
    </subcellularLocation>
</comment>
<comment type="domain">
    <text evidence="1">The entire WD repeat region is required for the interaction with ORC complex components, as well as for association with chromatin and for binding to histone H3 and H4 trimethylation marks H3K9me3 and H4K20me3.</text>
</comment>
<comment type="similarity">
    <text evidence="6">Belongs to the LRWD1 family.</text>
</comment>
<comment type="sequence caution" evidence="6">
    <conflict type="erroneous initiation">
        <sequence resource="EMBL-CDS" id="AAH95309"/>
    </conflict>
    <text>Extended N-terminus.</text>
</comment>
<name>LRWD1_DANRE</name>
<reference key="1">
    <citation type="journal article" date="2013" name="Nature">
        <title>The zebrafish reference genome sequence and its relationship to the human genome.</title>
        <authorList>
            <person name="Howe K."/>
            <person name="Clark M.D."/>
            <person name="Torroja C.F."/>
            <person name="Torrance J."/>
            <person name="Berthelot C."/>
            <person name="Muffato M."/>
            <person name="Collins J.E."/>
            <person name="Humphray S."/>
            <person name="McLaren K."/>
            <person name="Matthews L."/>
            <person name="McLaren S."/>
            <person name="Sealy I."/>
            <person name="Caccamo M."/>
            <person name="Churcher C."/>
            <person name="Scott C."/>
            <person name="Barrett J.C."/>
            <person name="Koch R."/>
            <person name="Rauch G.J."/>
            <person name="White S."/>
            <person name="Chow W."/>
            <person name="Kilian B."/>
            <person name="Quintais L.T."/>
            <person name="Guerra-Assuncao J.A."/>
            <person name="Zhou Y."/>
            <person name="Gu Y."/>
            <person name="Yen J."/>
            <person name="Vogel J.H."/>
            <person name="Eyre T."/>
            <person name="Redmond S."/>
            <person name="Banerjee R."/>
            <person name="Chi J."/>
            <person name="Fu B."/>
            <person name="Langley E."/>
            <person name="Maguire S.F."/>
            <person name="Laird G.K."/>
            <person name="Lloyd D."/>
            <person name="Kenyon E."/>
            <person name="Donaldson S."/>
            <person name="Sehra H."/>
            <person name="Almeida-King J."/>
            <person name="Loveland J."/>
            <person name="Trevanion S."/>
            <person name="Jones M."/>
            <person name="Quail M."/>
            <person name="Willey D."/>
            <person name="Hunt A."/>
            <person name="Burton J."/>
            <person name="Sims S."/>
            <person name="McLay K."/>
            <person name="Plumb B."/>
            <person name="Davis J."/>
            <person name="Clee C."/>
            <person name="Oliver K."/>
            <person name="Clark R."/>
            <person name="Riddle C."/>
            <person name="Elliot D."/>
            <person name="Threadgold G."/>
            <person name="Harden G."/>
            <person name="Ware D."/>
            <person name="Begum S."/>
            <person name="Mortimore B."/>
            <person name="Kerry G."/>
            <person name="Heath P."/>
            <person name="Phillimore B."/>
            <person name="Tracey A."/>
            <person name="Corby N."/>
            <person name="Dunn M."/>
            <person name="Johnson C."/>
            <person name="Wood J."/>
            <person name="Clark S."/>
            <person name="Pelan S."/>
            <person name="Griffiths G."/>
            <person name="Smith M."/>
            <person name="Glithero R."/>
            <person name="Howden P."/>
            <person name="Barker N."/>
            <person name="Lloyd C."/>
            <person name="Stevens C."/>
            <person name="Harley J."/>
            <person name="Holt K."/>
            <person name="Panagiotidis G."/>
            <person name="Lovell J."/>
            <person name="Beasley H."/>
            <person name="Henderson C."/>
            <person name="Gordon D."/>
            <person name="Auger K."/>
            <person name="Wright D."/>
            <person name="Collins J."/>
            <person name="Raisen C."/>
            <person name="Dyer L."/>
            <person name="Leung K."/>
            <person name="Robertson L."/>
            <person name="Ambridge K."/>
            <person name="Leongamornlert D."/>
            <person name="McGuire S."/>
            <person name="Gilderthorp R."/>
            <person name="Griffiths C."/>
            <person name="Manthravadi D."/>
            <person name="Nichol S."/>
            <person name="Barker G."/>
            <person name="Whitehead S."/>
            <person name="Kay M."/>
            <person name="Brown J."/>
            <person name="Murnane C."/>
            <person name="Gray E."/>
            <person name="Humphries M."/>
            <person name="Sycamore N."/>
            <person name="Barker D."/>
            <person name="Saunders D."/>
            <person name="Wallis J."/>
            <person name="Babbage A."/>
            <person name="Hammond S."/>
            <person name="Mashreghi-Mohammadi M."/>
            <person name="Barr L."/>
            <person name="Martin S."/>
            <person name="Wray P."/>
            <person name="Ellington A."/>
            <person name="Matthews N."/>
            <person name="Ellwood M."/>
            <person name="Woodmansey R."/>
            <person name="Clark G."/>
            <person name="Cooper J."/>
            <person name="Tromans A."/>
            <person name="Grafham D."/>
            <person name="Skuce C."/>
            <person name="Pandian R."/>
            <person name="Andrews R."/>
            <person name="Harrison E."/>
            <person name="Kimberley A."/>
            <person name="Garnett J."/>
            <person name="Fosker N."/>
            <person name="Hall R."/>
            <person name="Garner P."/>
            <person name="Kelly D."/>
            <person name="Bird C."/>
            <person name="Palmer S."/>
            <person name="Gehring I."/>
            <person name="Berger A."/>
            <person name="Dooley C.M."/>
            <person name="Ersan-Urun Z."/>
            <person name="Eser C."/>
            <person name="Geiger H."/>
            <person name="Geisler M."/>
            <person name="Karotki L."/>
            <person name="Kirn A."/>
            <person name="Konantz J."/>
            <person name="Konantz M."/>
            <person name="Oberlander M."/>
            <person name="Rudolph-Geiger S."/>
            <person name="Teucke M."/>
            <person name="Lanz C."/>
            <person name="Raddatz G."/>
            <person name="Osoegawa K."/>
            <person name="Zhu B."/>
            <person name="Rapp A."/>
            <person name="Widaa S."/>
            <person name="Langford C."/>
            <person name="Yang F."/>
            <person name="Schuster S.C."/>
            <person name="Carter N.P."/>
            <person name="Harrow J."/>
            <person name="Ning Z."/>
            <person name="Herrero J."/>
            <person name="Searle S.M."/>
            <person name="Enright A."/>
            <person name="Geisler R."/>
            <person name="Plasterk R.H."/>
            <person name="Lee C."/>
            <person name="Westerfield M."/>
            <person name="de Jong P.J."/>
            <person name="Zon L.I."/>
            <person name="Postlethwait J.H."/>
            <person name="Nusslein-Volhard C."/>
            <person name="Hubbard T.J."/>
            <person name="Roest Crollius H."/>
            <person name="Rogers J."/>
            <person name="Stemple D.L."/>
        </authorList>
    </citation>
    <scope>NUCLEOTIDE SEQUENCE [LARGE SCALE GENOMIC DNA]</scope>
    <source>
        <strain>Tuebingen</strain>
    </source>
</reference>
<reference key="2">
    <citation type="submission" date="2005-05" db="EMBL/GenBank/DDBJ databases">
        <authorList>
            <consortium name="NIH - Zebrafish Gene Collection (ZGC) project"/>
        </authorList>
    </citation>
    <scope>NUCLEOTIDE SEQUENCE [LARGE SCALE MRNA]</scope>
    <source>
        <tissue>Embryo</tissue>
    </source>
</reference>
<reference key="3">
    <citation type="journal article" date="2008" name="J. Proteome Res.">
        <title>Online automated in vivo zebrafish phosphoproteomics: from large-scale analysis down to a single embryo.</title>
        <authorList>
            <person name="Lemeer S."/>
            <person name="Pinkse M.W.H."/>
            <person name="Mohammed S."/>
            <person name="van Breukelen B."/>
            <person name="den Hertog J."/>
            <person name="Slijper M."/>
            <person name="Heck A.J.R."/>
        </authorList>
    </citation>
    <scope>PHOSPHORYLATION [LARGE SCALE ANALYSIS] AT SER-270; THR-280 AND SER-290</scope>
    <scope>IDENTIFICATION BY MASS SPECTROMETRY</scope>
    <source>
        <tissue>Embryo</tissue>
    </source>
</reference>
<dbReference type="EMBL" id="AL935280">
    <property type="protein sequence ID" value="CAQ13767.1"/>
    <property type="molecule type" value="Genomic_DNA"/>
</dbReference>
<dbReference type="EMBL" id="BC095309">
    <property type="protein sequence ID" value="AAH95309.1"/>
    <property type="status" value="ALT_INIT"/>
    <property type="molecule type" value="mRNA"/>
</dbReference>
<dbReference type="RefSeq" id="NP_001292591.1">
    <property type="nucleotide sequence ID" value="NM_001305662.1"/>
</dbReference>
<dbReference type="RefSeq" id="XP_017211530.1">
    <property type="nucleotide sequence ID" value="XM_017356041.3"/>
</dbReference>
<dbReference type="RefSeq" id="XP_021331688.1">
    <property type="nucleotide sequence ID" value="XM_021476013.2"/>
</dbReference>
<dbReference type="SMR" id="B0R160"/>
<dbReference type="FunCoup" id="B0R160">
    <property type="interactions" value="1274"/>
</dbReference>
<dbReference type="STRING" id="7955.ENSDARP00000050905"/>
<dbReference type="iPTMnet" id="B0R160"/>
<dbReference type="PaxDb" id="7955-ENSDARP00000050905"/>
<dbReference type="PeptideAtlas" id="B0R160"/>
<dbReference type="Ensembl" id="ENSDART00000050906">
    <property type="protein sequence ID" value="ENSDARP00000050905"/>
    <property type="gene ID" value="ENSDARG00000035147"/>
</dbReference>
<dbReference type="GeneID" id="327124"/>
<dbReference type="KEGG" id="dre:327124"/>
<dbReference type="AGR" id="ZFIN:ZDB-GENE-030131-5335"/>
<dbReference type="CTD" id="222229"/>
<dbReference type="ZFIN" id="ZDB-GENE-030131-5335">
    <property type="gene designation" value="lrwd1"/>
</dbReference>
<dbReference type="eggNOG" id="KOG0619">
    <property type="taxonomic scope" value="Eukaryota"/>
</dbReference>
<dbReference type="HOGENOM" id="CLU_022994_0_0_1"/>
<dbReference type="InParanoid" id="B0R160"/>
<dbReference type="OMA" id="TCPGQAY"/>
<dbReference type="OrthoDB" id="7318948at2759"/>
<dbReference type="PhylomeDB" id="B0R160"/>
<dbReference type="TreeFam" id="TF329554"/>
<dbReference type="PRO" id="PR:B0R160"/>
<dbReference type="Proteomes" id="UP000000437">
    <property type="component" value="Chromosome 5"/>
</dbReference>
<dbReference type="Bgee" id="ENSDARG00000035147">
    <property type="expression patterns" value="Expressed in gastrula and 27 other cell types or tissues"/>
</dbReference>
<dbReference type="ExpressionAtlas" id="B0R160">
    <property type="expression patterns" value="baseline"/>
</dbReference>
<dbReference type="GO" id="GO:0005813">
    <property type="term" value="C:centrosome"/>
    <property type="evidence" value="ECO:0007669"/>
    <property type="project" value="UniProtKB-SubCell"/>
</dbReference>
<dbReference type="GO" id="GO:0000781">
    <property type="term" value="C:chromosome, telomeric region"/>
    <property type="evidence" value="ECO:0000250"/>
    <property type="project" value="UniProtKB"/>
</dbReference>
<dbReference type="GO" id="GO:0005737">
    <property type="term" value="C:cytoplasm"/>
    <property type="evidence" value="ECO:0007669"/>
    <property type="project" value="UniProtKB-KW"/>
</dbReference>
<dbReference type="GO" id="GO:0000776">
    <property type="term" value="C:kinetochore"/>
    <property type="evidence" value="ECO:0000250"/>
    <property type="project" value="UniProtKB"/>
</dbReference>
<dbReference type="GO" id="GO:0005664">
    <property type="term" value="C:nuclear origin of replication recognition complex"/>
    <property type="evidence" value="ECO:0000250"/>
    <property type="project" value="UniProtKB"/>
</dbReference>
<dbReference type="GO" id="GO:0005634">
    <property type="term" value="C:nucleus"/>
    <property type="evidence" value="ECO:0000250"/>
    <property type="project" value="UniProtKB"/>
</dbReference>
<dbReference type="GO" id="GO:0005721">
    <property type="term" value="C:pericentric heterochromatin"/>
    <property type="evidence" value="ECO:0000250"/>
    <property type="project" value="UniProtKB"/>
</dbReference>
<dbReference type="GO" id="GO:0003682">
    <property type="term" value="F:chromatin binding"/>
    <property type="evidence" value="ECO:0000250"/>
    <property type="project" value="UniProtKB"/>
</dbReference>
<dbReference type="GO" id="GO:0061628">
    <property type="term" value="F:histone H3K27me3 reader activity"/>
    <property type="evidence" value="ECO:0000250"/>
    <property type="project" value="UniProtKB"/>
</dbReference>
<dbReference type="GO" id="GO:0008327">
    <property type="term" value="F:methyl-CpG binding"/>
    <property type="evidence" value="ECO:0000250"/>
    <property type="project" value="UniProtKB"/>
</dbReference>
<dbReference type="GO" id="GO:0006325">
    <property type="term" value="P:chromatin organization"/>
    <property type="evidence" value="ECO:0000250"/>
    <property type="project" value="UniProtKB"/>
</dbReference>
<dbReference type="GO" id="GO:0006260">
    <property type="term" value="P:DNA replication"/>
    <property type="evidence" value="ECO:0007669"/>
    <property type="project" value="UniProtKB-KW"/>
</dbReference>
<dbReference type="GO" id="GO:0071169">
    <property type="term" value="P:establishment of protein localization to chromatin"/>
    <property type="evidence" value="ECO:0000250"/>
    <property type="project" value="UniProtKB"/>
</dbReference>
<dbReference type="FunFam" id="2.130.10.10:FF:000488">
    <property type="entry name" value="Leucine-rich repeat and WD repeat-containing protein 1"/>
    <property type="match status" value="1"/>
</dbReference>
<dbReference type="FunFam" id="3.80.10.10:FF:000429">
    <property type="entry name" value="Leucine-rich repeat and WD repeat-containing protein 1"/>
    <property type="match status" value="1"/>
</dbReference>
<dbReference type="Gene3D" id="3.80.10.10">
    <property type="entry name" value="Ribonuclease Inhibitor"/>
    <property type="match status" value="1"/>
</dbReference>
<dbReference type="Gene3D" id="2.130.10.10">
    <property type="entry name" value="YVTN repeat-like/Quinoprotein amine dehydrogenase"/>
    <property type="match status" value="1"/>
</dbReference>
<dbReference type="InterPro" id="IPR001611">
    <property type="entry name" value="Leu-rich_rpt"/>
</dbReference>
<dbReference type="InterPro" id="IPR032675">
    <property type="entry name" value="LRR_dom_sf"/>
</dbReference>
<dbReference type="InterPro" id="IPR056363">
    <property type="entry name" value="LRR_LRWD1_dom"/>
</dbReference>
<dbReference type="InterPro" id="IPR052489">
    <property type="entry name" value="LRWD1"/>
</dbReference>
<dbReference type="InterPro" id="IPR015943">
    <property type="entry name" value="WD40/YVTN_repeat-like_dom_sf"/>
</dbReference>
<dbReference type="InterPro" id="IPR019775">
    <property type="entry name" value="WD40_repeat_CS"/>
</dbReference>
<dbReference type="InterPro" id="IPR036322">
    <property type="entry name" value="WD40_repeat_dom_sf"/>
</dbReference>
<dbReference type="InterPro" id="IPR001680">
    <property type="entry name" value="WD40_rpt"/>
</dbReference>
<dbReference type="InterPro" id="IPR056160">
    <property type="entry name" value="WD_LRWD1"/>
</dbReference>
<dbReference type="PANTHER" id="PTHR24370:SF10">
    <property type="entry name" value="LEUCINE-RICH REPEAT AND WD REPEAT-CONTAINING PROTEIN 1"/>
    <property type="match status" value="1"/>
</dbReference>
<dbReference type="PANTHER" id="PTHR24370">
    <property type="entry name" value="OPTICIN"/>
    <property type="match status" value="1"/>
</dbReference>
<dbReference type="Pfam" id="PF23211">
    <property type="entry name" value="LRR_LRWD1"/>
    <property type="match status" value="1"/>
</dbReference>
<dbReference type="Pfam" id="PF23215">
    <property type="entry name" value="WD_LRWD1"/>
    <property type="match status" value="1"/>
</dbReference>
<dbReference type="SMART" id="SM00320">
    <property type="entry name" value="WD40"/>
    <property type="match status" value="4"/>
</dbReference>
<dbReference type="SUPFAM" id="SSF52058">
    <property type="entry name" value="L domain-like"/>
    <property type="match status" value="1"/>
</dbReference>
<dbReference type="SUPFAM" id="SSF50978">
    <property type="entry name" value="WD40 repeat-like"/>
    <property type="match status" value="1"/>
</dbReference>
<dbReference type="PROSITE" id="PS51450">
    <property type="entry name" value="LRR"/>
    <property type="match status" value="3"/>
</dbReference>
<dbReference type="PROSITE" id="PS00678">
    <property type="entry name" value="WD_REPEATS_1"/>
    <property type="match status" value="1"/>
</dbReference>
<dbReference type="PROSITE" id="PS50082">
    <property type="entry name" value="WD_REPEATS_2"/>
    <property type="match status" value="1"/>
</dbReference>
<organism>
    <name type="scientific">Danio rerio</name>
    <name type="common">Zebrafish</name>
    <name type="synonym">Brachydanio rerio</name>
    <dbReference type="NCBI Taxonomy" id="7955"/>
    <lineage>
        <taxon>Eukaryota</taxon>
        <taxon>Metazoa</taxon>
        <taxon>Chordata</taxon>
        <taxon>Craniata</taxon>
        <taxon>Vertebrata</taxon>
        <taxon>Euteleostomi</taxon>
        <taxon>Actinopterygii</taxon>
        <taxon>Neopterygii</taxon>
        <taxon>Teleostei</taxon>
        <taxon>Ostariophysi</taxon>
        <taxon>Cypriniformes</taxon>
        <taxon>Danionidae</taxon>
        <taxon>Danioninae</taxon>
        <taxon>Danio</taxon>
    </lineage>
</organism>
<gene>
    <name type="primary">lrwd1</name>
    <name type="synonym">orca</name>
</gene>
<feature type="chain" id="PRO_0000403769" description="Leucine-rich repeat and WD repeat-containing protein 1">
    <location>
        <begin position="1"/>
        <end position="763"/>
    </location>
</feature>
<feature type="repeat" description="LRR 1">
    <location>
        <begin position="22"/>
        <end position="43"/>
    </location>
</feature>
<feature type="repeat" description="LRR 2">
    <location>
        <begin position="48"/>
        <end position="69"/>
    </location>
</feature>
<feature type="repeat" description="LRR 3">
    <location>
        <begin position="70"/>
        <end position="91"/>
    </location>
</feature>
<feature type="repeat" description="LRR 4">
    <location>
        <begin position="92"/>
        <end position="113"/>
    </location>
</feature>
<feature type="repeat" description="WD 1">
    <location>
        <begin position="499"/>
        <end position="539"/>
    </location>
</feature>
<feature type="repeat" description="WD 2">
    <location>
        <begin position="608"/>
        <end position="647"/>
    </location>
</feature>
<feature type="repeat" description="WD 3">
    <location>
        <begin position="653"/>
        <end position="704"/>
    </location>
</feature>
<feature type="repeat" description="WD 4">
    <location>
        <begin position="729"/>
        <end position="763"/>
    </location>
</feature>
<feature type="region of interest" description="Disordered" evidence="4">
    <location>
        <begin position="206"/>
        <end position="372"/>
    </location>
</feature>
<feature type="compositionally biased region" description="Polar residues" evidence="4">
    <location>
        <begin position="277"/>
        <end position="288"/>
    </location>
</feature>
<feature type="compositionally biased region" description="Polar residues" evidence="4">
    <location>
        <begin position="313"/>
        <end position="325"/>
    </location>
</feature>
<feature type="modified residue" description="Phosphoserine" evidence="5">
    <location>
        <position position="270"/>
    </location>
</feature>
<feature type="modified residue" description="Phosphothreonine" evidence="5">
    <location>
        <position position="280"/>
    </location>
</feature>
<feature type="modified residue" description="Phosphoserine" evidence="5">
    <location>
        <position position="290"/>
    </location>
</feature>
<feature type="sequence conflict" description="In Ref. 2; AAH95309." evidence="6" ref="2">
    <original>T</original>
    <variation>P</variation>
    <location>
        <position position="15"/>
    </location>
</feature>
<feature type="sequence conflict" description="In Ref. 2; AAH95309." evidence="6" ref="2">
    <original>K</original>
    <variation>T</variation>
    <location>
        <position position="225"/>
    </location>
</feature>
<feature type="sequence conflict" description="In Ref. 2; AAH95309." evidence="6" ref="2">
    <original>V</original>
    <variation>I</variation>
    <location>
        <position position="250"/>
    </location>
</feature>
<feature type="sequence conflict" description="In Ref. 2; AAH95309." evidence="6" ref="2">
    <original>M</original>
    <variation>T</variation>
    <location>
        <position position="356"/>
    </location>
</feature>
<feature type="sequence conflict" description="In Ref. 2; AAH95309." evidence="6" ref="2">
    <original>D</original>
    <variation>G</variation>
    <location>
        <position position="394"/>
    </location>
</feature>
<feature type="sequence conflict" description="In Ref. 2; AAH95309." evidence="6" ref="2">
    <original>I</original>
    <variation>V</variation>
    <location>
        <position position="422"/>
    </location>
</feature>
<feature type="sequence conflict" description="In Ref. 2; AAH95309." evidence="6" ref="2">
    <original>K</original>
    <variation>D</variation>
    <location>
        <position position="524"/>
    </location>
</feature>
<feature type="sequence conflict" description="In Ref. 2; AAH95309." evidence="6" ref="2">
    <original>I</original>
    <variation>N</variation>
    <location>
        <position position="542"/>
    </location>
</feature>
<feature type="sequence conflict" description="In Ref. 2; AAH95309." evidence="6" ref="2">
    <original>L</original>
    <variation>Q</variation>
    <location>
        <position position="588"/>
    </location>
</feature>
<feature type="sequence conflict" description="In Ref. 2; AAH95309." evidence="6" ref="2">
    <original>G</original>
    <variation>V</variation>
    <location>
        <position position="707"/>
    </location>
</feature>
<feature type="sequence conflict" description="In Ref. 2; AAH95309." evidence="6" ref="2">
    <original>K</original>
    <variation>N</variation>
    <location>
        <position position="752"/>
    </location>
</feature>